<proteinExistence type="inferred from homology"/>
<keyword id="KW-0997">Cell inner membrane</keyword>
<keyword id="KW-1003">Cell membrane</keyword>
<keyword id="KW-0249">Electron transport</keyword>
<keyword id="KW-0349">Heme</keyword>
<keyword id="KW-0408">Iron</keyword>
<keyword id="KW-0472">Membrane</keyword>
<keyword id="KW-0479">Metal-binding</keyword>
<keyword id="KW-0602">Photosynthesis</keyword>
<keyword id="KW-0604">Photosystem II</keyword>
<keyword id="KW-1185">Reference proteome</keyword>
<keyword id="KW-0732">Signal</keyword>
<keyword id="KW-0813">Transport</keyword>
<dbReference type="EMBL" id="BA000045">
    <property type="protein sequence ID" value="BAC90278.1"/>
    <property type="molecule type" value="Genomic_DNA"/>
</dbReference>
<dbReference type="RefSeq" id="NP_925283.1">
    <property type="nucleotide sequence ID" value="NC_005125.1"/>
</dbReference>
<dbReference type="RefSeq" id="WP_011142333.1">
    <property type="nucleotide sequence ID" value="NC_005125.1"/>
</dbReference>
<dbReference type="SMR" id="Q7NI47"/>
<dbReference type="STRING" id="251221.gene:10759834"/>
<dbReference type="EnsemblBacteria" id="BAC90278">
    <property type="protein sequence ID" value="BAC90278"/>
    <property type="gene ID" value="BAC90278"/>
</dbReference>
<dbReference type="KEGG" id="gvi:gll2337"/>
<dbReference type="eggNOG" id="COG2010">
    <property type="taxonomic scope" value="Bacteria"/>
</dbReference>
<dbReference type="HOGENOM" id="CLU_104149_0_0_3"/>
<dbReference type="InParanoid" id="Q7NI47"/>
<dbReference type="OrthoDB" id="486949at2"/>
<dbReference type="PhylomeDB" id="Q7NI47"/>
<dbReference type="Proteomes" id="UP000000557">
    <property type="component" value="Chromosome"/>
</dbReference>
<dbReference type="GO" id="GO:0009523">
    <property type="term" value="C:photosystem II"/>
    <property type="evidence" value="ECO:0007669"/>
    <property type="project" value="UniProtKB-KW"/>
</dbReference>
<dbReference type="GO" id="GO:0005886">
    <property type="term" value="C:plasma membrane"/>
    <property type="evidence" value="ECO:0007669"/>
    <property type="project" value="UniProtKB-SubCell"/>
</dbReference>
<dbReference type="GO" id="GO:0009055">
    <property type="term" value="F:electron transfer activity"/>
    <property type="evidence" value="ECO:0007669"/>
    <property type="project" value="InterPro"/>
</dbReference>
<dbReference type="GO" id="GO:0020037">
    <property type="term" value="F:heme binding"/>
    <property type="evidence" value="ECO:0007669"/>
    <property type="project" value="InterPro"/>
</dbReference>
<dbReference type="GO" id="GO:0005506">
    <property type="term" value="F:iron ion binding"/>
    <property type="evidence" value="ECO:0007669"/>
    <property type="project" value="InterPro"/>
</dbReference>
<dbReference type="GO" id="GO:0015979">
    <property type="term" value="P:photosynthesis"/>
    <property type="evidence" value="ECO:0007669"/>
    <property type="project" value="UniProtKB-KW"/>
</dbReference>
<dbReference type="GO" id="GO:0022904">
    <property type="term" value="P:respiratory electron transport chain"/>
    <property type="evidence" value="ECO:0007669"/>
    <property type="project" value="InterPro"/>
</dbReference>
<dbReference type="Gene3D" id="1.10.760.10">
    <property type="entry name" value="Cytochrome c-like domain"/>
    <property type="match status" value="1"/>
</dbReference>
<dbReference type="InterPro" id="IPR009056">
    <property type="entry name" value="Cyt_c-like_dom"/>
</dbReference>
<dbReference type="InterPro" id="IPR036909">
    <property type="entry name" value="Cyt_c-like_dom_sf"/>
</dbReference>
<dbReference type="InterPro" id="IPR029490">
    <property type="entry name" value="Cytochrom_C550"/>
</dbReference>
<dbReference type="InterPro" id="IPR016003">
    <property type="entry name" value="PsbV_cyt_c550-like"/>
</dbReference>
<dbReference type="NCBIfam" id="TIGR03046">
    <property type="entry name" value="PS_II_psbV2"/>
    <property type="match status" value="1"/>
</dbReference>
<dbReference type="Pfam" id="PF14495">
    <property type="entry name" value="Cytochrom_C550"/>
    <property type="match status" value="1"/>
</dbReference>
<dbReference type="PIRSF" id="PIRSF005890">
    <property type="entry name" value="Phot_II_cyt_c550"/>
    <property type="match status" value="1"/>
</dbReference>
<dbReference type="SUPFAM" id="SSF46626">
    <property type="entry name" value="Cytochrome c"/>
    <property type="match status" value="1"/>
</dbReference>
<dbReference type="PROSITE" id="PS51007">
    <property type="entry name" value="CYTC"/>
    <property type="match status" value="1"/>
</dbReference>
<accession>Q7NI47</accession>
<organism>
    <name type="scientific">Gloeobacter violaceus (strain ATCC 29082 / PCC 7421)</name>
    <dbReference type="NCBI Taxonomy" id="251221"/>
    <lineage>
        <taxon>Bacteria</taxon>
        <taxon>Bacillati</taxon>
        <taxon>Cyanobacteriota</taxon>
        <taxon>Cyanophyceae</taxon>
        <taxon>Gloeobacterales</taxon>
        <taxon>Gloeobacteraceae</taxon>
        <taxon>Gloeobacter</taxon>
    </lineage>
</organism>
<comment type="function">
    <text evidence="2 3">Probably one of the extrinsic, lumenal subunits of photosystem II (PSII). PSII is a light-driven water plastoquinone oxidoreductase, using light energy to abstract electrons from H(2)O, generating a proton gradient subsequently used for ATP formation. The extrinsic proteins stabilize the structure of photosystem II oxygen-evolving complex (OEC), the ion environment of oxygen evolution and protect the OEC against heat-induced inactivation. Low-potential cytochrome c that plays a role in the OEC of PSII.</text>
</comment>
<comment type="cofactor">
    <cofactor evidence="2">
        <name>heme c</name>
        <dbReference type="ChEBI" id="CHEBI:61717"/>
    </cofactor>
    <text evidence="2">Binds 1 heme c group covalently per subunit.</text>
</comment>
<comment type="subunit">
    <text evidence="7">PSII is composed of 1 copy each of membrane proteins PsbA, PsbB, PsbC, PsbD, PsbE, PsbF, PsbH, PsbI, PsbJ, PsbK, PsbL, PsbM, PsbT, PsbX, Psb30/Ycf12, peripheral proteins PsbO, CyanoQ (PsbQ), PsbU, PsbV and a large number of cofactors. It forms dimeric complexes.</text>
</comment>
<comment type="subcellular location">
    <subcellularLocation>
        <location evidence="1">Cell inner membrane</location>
        <topology evidence="1">Peripheral membrane protein</topology>
        <orientation evidence="1">Periplasmic side</orientation>
    </subcellularLocation>
    <text evidence="2 7">Associated with photosystem II at the periplasmic side of the inner membrane.</text>
</comment>
<comment type="similarity">
    <text evidence="7">Belongs to the cytochrome c family. PsbV subfamily.</text>
</comment>
<evidence type="ECO:0000250" key="1"/>
<evidence type="ECO:0000250" key="2">
    <source>
        <dbReference type="UniProtKB" id="P0A386"/>
    </source>
</evidence>
<evidence type="ECO:0000250" key="3">
    <source>
        <dbReference type="UniProtKB" id="Q8DJE2"/>
    </source>
</evidence>
<evidence type="ECO:0000255" key="4"/>
<evidence type="ECO:0000255" key="5">
    <source>
        <dbReference type="HAMAP-Rule" id="MF_01378"/>
    </source>
</evidence>
<evidence type="ECO:0000255" key="6">
    <source>
        <dbReference type="PROSITE-ProRule" id="PRU00433"/>
    </source>
</evidence>
<evidence type="ECO:0000305" key="7"/>
<reference key="1">
    <citation type="journal article" date="2003" name="DNA Res.">
        <title>Complete genome structure of Gloeobacter violaceus PCC 7421, a cyanobacterium that lacks thylakoids.</title>
        <authorList>
            <person name="Nakamura Y."/>
            <person name="Kaneko T."/>
            <person name="Sato S."/>
            <person name="Mimuro M."/>
            <person name="Miyashita H."/>
            <person name="Tsuchiya T."/>
            <person name="Sasamoto S."/>
            <person name="Watanabe A."/>
            <person name="Kawashima K."/>
            <person name="Kishida Y."/>
            <person name="Kiyokawa C."/>
            <person name="Kohara M."/>
            <person name="Matsumoto M."/>
            <person name="Matsuno A."/>
            <person name="Nakazaki N."/>
            <person name="Shimpo S."/>
            <person name="Takeuchi C."/>
            <person name="Yamada M."/>
            <person name="Tabata S."/>
        </authorList>
    </citation>
    <scope>NUCLEOTIDE SEQUENCE [LARGE SCALE GENOMIC DNA]</scope>
    <source>
        <strain>ATCC 29082 / PCC 7421</strain>
    </source>
</reference>
<protein>
    <recommendedName>
        <fullName evidence="5">Photosystem II extrinsic protein V</fullName>
        <shortName evidence="5">PsbV</shortName>
    </recommendedName>
    <alternativeName>
        <fullName>Cytochrome c-550 1</fullName>
    </alternativeName>
    <alternativeName>
        <fullName>Cytochrome c550 1</fullName>
    </alternativeName>
    <alternativeName>
        <fullName>Low-potential cytochrome c 1</fullName>
    </alternativeName>
</protein>
<gene>
    <name type="primary">psbV1</name>
    <name type="ordered locus">gll2337</name>
</gene>
<sequence length="183" mass="19725">MTFGHCRRASTLRSAFVLGLCGLLLAGCSGADDDRDAAALKDKYVTVNLGVRGPVDLPADGVGNLQTFSPQQIYAGKKLFESNCQNCHVGGTTTPNPKVSLALAKLQGATPPRDNIQSLVQYMRLPMSYDGSEETFNCRKSDWIEDDEAQNLAAFILRASQKARGWGTARLEANQDSMTTAPP</sequence>
<feature type="signal peptide" evidence="4">
    <location>
        <begin position="1"/>
        <end position="31"/>
    </location>
</feature>
<feature type="chain" id="PRO_0000295597" description="Photosystem II extrinsic protein V">
    <location>
        <begin position="32"/>
        <end position="183"/>
    </location>
</feature>
<feature type="binding site" description="covalent" evidence="6">
    <location>
        <position position="84"/>
    </location>
    <ligand>
        <name>heme c</name>
        <dbReference type="ChEBI" id="CHEBI:61717"/>
    </ligand>
</feature>
<feature type="binding site" description="covalent" evidence="6">
    <location>
        <position position="87"/>
    </location>
    <ligand>
        <name>heme c</name>
        <dbReference type="ChEBI" id="CHEBI:61717"/>
    </ligand>
</feature>
<feature type="binding site" description="axial binding residue" evidence="6">
    <location>
        <position position="88"/>
    </location>
    <ligand>
        <name>heme c</name>
        <dbReference type="ChEBI" id="CHEBI:61717"/>
    </ligand>
    <ligandPart>
        <name>Fe</name>
        <dbReference type="ChEBI" id="CHEBI:18248"/>
    </ligandPart>
</feature>
<feature type="binding site" evidence="3">
    <location>
        <position position="138"/>
    </location>
    <ligand>
        <name>heme c</name>
        <dbReference type="ChEBI" id="CHEBI:61717"/>
    </ligand>
    <ligandPart>
        <name>Fe</name>
        <dbReference type="ChEBI" id="CHEBI:18248"/>
    </ligandPart>
</feature>
<name>C5501_GLOVI</name>